<name>YNIW_AZOCH</name>
<sequence>MDLQDFDSAHLYFDEPLAPEVAPVWPAAEQYAEGTAEQPLLEAQALAPDDLTVLVGLYRFYYYQHRYEAALQIARRRVEVVGPRLLLPANWSEIDAGHVAVAAERGIGLLRFYLLALKGGYLSLRLGRFEQGKAMLLKVVELDTDNRLGARLLLDVLAEHSAEILIFPTAANAEIRP</sequence>
<protein>
    <recommendedName>
        <fullName>Uncharacterized 19.8 kDa protein in nifW 5'region</fullName>
    </recommendedName>
    <alternativeName>
        <fullName>ORF5</fullName>
    </alternativeName>
</protein>
<dbReference type="EMBL" id="M60090">
    <property type="protein sequence ID" value="AAA22163.1"/>
    <property type="molecule type" value="Genomic_DNA"/>
</dbReference>
<dbReference type="PIR" id="E43706">
    <property type="entry name" value="E43706"/>
</dbReference>
<dbReference type="SMR" id="P23177"/>
<dbReference type="Gene3D" id="1.25.40.10">
    <property type="entry name" value="Tetratricopeptide repeat domain"/>
    <property type="match status" value="1"/>
</dbReference>
<dbReference type="InterPro" id="IPR011990">
    <property type="entry name" value="TPR-like_helical_dom_sf"/>
</dbReference>
<dbReference type="SUPFAM" id="SSF48452">
    <property type="entry name" value="TPR-like"/>
    <property type="match status" value="1"/>
</dbReference>
<proteinExistence type="predicted"/>
<feature type="chain" id="PRO_0000066333" description="Uncharacterized 19.8 kDa protein in nifW 5'region">
    <location>
        <begin position="1"/>
        <end position="177"/>
    </location>
</feature>
<accession>P23177</accession>
<organism>
    <name type="scientific">Azotobacter chroococcum mcd 1</name>
    <dbReference type="NCBI Taxonomy" id="355"/>
    <lineage>
        <taxon>Bacteria</taxon>
        <taxon>Pseudomonadati</taxon>
        <taxon>Pseudomonadota</taxon>
        <taxon>Gammaproteobacteria</taxon>
        <taxon>Pseudomonadales</taxon>
        <taxon>Pseudomonadaceae</taxon>
        <taxon>Azotobacter</taxon>
    </lineage>
</organism>
<reference key="1">
    <citation type="journal article" date="1991" name="J. Bacteriol.">
        <title>Nucleotide sequence and genetic analysis of the Azotobacter chroococcum nifUSVWZM gene cluster, including a new gene (nifP) which encodes a serine acetyltransferase.</title>
        <authorList>
            <person name="Evans D.J."/>
            <person name="Jones R."/>
            <person name="Woodley P.R."/>
            <person name="Wilborn J.R."/>
            <person name="Robson R.L."/>
        </authorList>
    </citation>
    <scope>NUCLEOTIDE SEQUENCE [GENOMIC DNA]</scope>
</reference>